<sequence>MIDPTLLRNNLSEIAEKLKVRRGFILDVDKFSQLEEQRKTLQIKTETLQAERNSRSKTIGAAKARGEDISTLLAEVDHMGAELNTVKEELANVLTEIEQLALTIPNIPADEVPLGKDDSDNKEVFRWGTPKKFDFEVKDHVALGEILGGLDFAAGVKLSGARFAVIKGQIARMHRALAQFMLDLHTEQHGYTEAYVPYLVNHTTLYGTGQLPKFGEELFHIKPLENEQTYALIPTAEVPVTNLVRDEIIDEADLPIKMTAHTPCFRSEAGSYGRDTRGLIRMHQFDKVELVQIVEPEKSMEALEELTNQAEKVLQLLNLPYRKVLLCTGDMGFGATKTYDLEVWIPAQNTYREISSCSNMWDFQARRMQARCRAKGDKKTRLVHTLNGSGLAVGRTLVAILENYQNADGSITVPEVLRPYMNGIEIIGK</sequence>
<gene>
    <name evidence="1" type="primary">serS</name>
    <name type="ordered locus">HSM_1560</name>
</gene>
<comment type="function">
    <text evidence="1">Catalyzes the attachment of serine to tRNA(Ser). Is also able to aminoacylate tRNA(Sec) with serine, to form the misacylated tRNA L-seryl-tRNA(Sec), which will be further converted into selenocysteinyl-tRNA(Sec).</text>
</comment>
<comment type="catalytic activity">
    <reaction evidence="1">
        <text>tRNA(Ser) + L-serine + ATP = L-seryl-tRNA(Ser) + AMP + diphosphate + H(+)</text>
        <dbReference type="Rhea" id="RHEA:12292"/>
        <dbReference type="Rhea" id="RHEA-COMP:9669"/>
        <dbReference type="Rhea" id="RHEA-COMP:9703"/>
        <dbReference type="ChEBI" id="CHEBI:15378"/>
        <dbReference type="ChEBI" id="CHEBI:30616"/>
        <dbReference type="ChEBI" id="CHEBI:33019"/>
        <dbReference type="ChEBI" id="CHEBI:33384"/>
        <dbReference type="ChEBI" id="CHEBI:78442"/>
        <dbReference type="ChEBI" id="CHEBI:78533"/>
        <dbReference type="ChEBI" id="CHEBI:456215"/>
        <dbReference type="EC" id="6.1.1.11"/>
    </reaction>
</comment>
<comment type="catalytic activity">
    <reaction evidence="1">
        <text>tRNA(Sec) + L-serine + ATP = L-seryl-tRNA(Sec) + AMP + diphosphate + H(+)</text>
        <dbReference type="Rhea" id="RHEA:42580"/>
        <dbReference type="Rhea" id="RHEA-COMP:9742"/>
        <dbReference type="Rhea" id="RHEA-COMP:10128"/>
        <dbReference type="ChEBI" id="CHEBI:15378"/>
        <dbReference type="ChEBI" id="CHEBI:30616"/>
        <dbReference type="ChEBI" id="CHEBI:33019"/>
        <dbReference type="ChEBI" id="CHEBI:33384"/>
        <dbReference type="ChEBI" id="CHEBI:78442"/>
        <dbReference type="ChEBI" id="CHEBI:78533"/>
        <dbReference type="ChEBI" id="CHEBI:456215"/>
        <dbReference type="EC" id="6.1.1.11"/>
    </reaction>
</comment>
<comment type="pathway">
    <text evidence="1">Aminoacyl-tRNA biosynthesis; selenocysteinyl-tRNA(Sec) biosynthesis; L-seryl-tRNA(Sec) from L-serine and tRNA(Sec): step 1/1.</text>
</comment>
<comment type="subunit">
    <text evidence="1">Homodimer. The tRNA molecule binds across the dimer.</text>
</comment>
<comment type="subcellular location">
    <subcellularLocation>
        <location evidence="1">Cytoplasm</location>
    </subcellularLocation>
</comment>
<comment type="domain">
    <text evidence="1">Consists of two distinct domains, a catalytic core and a N-terminal extension that is involved in tRNA binding.</text>
</comment>
<comment type="similarity">
    <text evidence="1">Belongs to the class-II aminoacyl-tRNA synthetase family. Type-1 seryl-tRNA synthetase subfamily.</text>
</comment>
<organism>
    <name type="scientific">Histophilus somni (strain 2336)</name>
    <name type="common">Haemophilus somnus</name>
    <dbReference type="NCBI Taxonomy" id="228400"/>
    <lineage>
        <taxon>Bacteria</taxon>
        <taxon>Pseudomonadati</taxon>
        <taxon>Pseudomonadota</taxon>
        <taxon>Gammaproteobacteria</taxon>
        <taxon>Pasteurellales</taxon>
        <taxon>Pasteurellaceae</taxon>
        <taxon>Histophilus</taxon>
    </lineage>
</organism>
<dbReference type="EC" id="6.1.1.11" evidence="1"/>
<dbReference type="EMBL" id="CP000947">
    <property type="protein sequence ID" value="ACA31319.1"/>
    <property type="molecule type" value="Genomic_DNA"/>
</dbReference>
<dbReference type="RefSeq" id="WP_012340700.1">
    <property type="nucleotide sequence ID" value="NC_010519.1"/>
</dbReference>
<dbReference type="SMR" id="B0UUT7"/>
<dbReference type="STRING" id="228400.HSM_1560"/>
<dbReference type="GeneID" id="31487863"/>
<dbReference type="KEGG" id="hsm:HSM_1560"/>
<dbReference type="HOGENOM" id="CLU_023797_1_1_6"/>
<dbReference type="UniPathway" id="UPA00906">
    <property type="reaction ID" value="UER00895"/>
</dbReference>
<dbReference type="GO" id="GO:0005737">
    <property type="term" value="C:cytoplasm"/>
    <property type="evidence" value="ECO:0007669"/>
    <property type="project" value="UniProtKB-SubCell"/>
</dbReference>
<dbReference type="GO" id="GO:0005524">
    <property type="term" value="F:ATP binding"/>
    <property type="evidence" value="ECO:0007669"/>
    <property type="project" value="UniProtKB-UniRule"/>
</dbReference>
<dbReference type="GO" id="GO:0004828">
    <property type="term" value="F:serine-tRNA ligase activity"/>
    <property type="evidence" value="ECO:0007669"/>
    <property type="project" value="UniProtKB-UniRule"/>
</dbReference>
<dbReference type="GO" id="GO:0016260">
    <property type="term" value="P:selenocysteine biosynthetic process"/>
    <property type="evidence" value="ECO:0007669"/>
    <property type="project" value="UniProtKB-UniRule"/>
</dbReference>
<dbReference type="GO" id="GO:0006434">
    <property type="term" value="P:seryl-tRNA aminoacylation"/>
    <property type="evidence" value="ECO:0007669"/>
    <property type="project" value="UniProtKB-UniRule"/>
</dbReference>
<dbReference type="CDD" id="cd00770">
    <property type="entry name" value="SerRS_core"/>
    <property type="match status" value="1"/>
</dbReference>
<dbReference type="FunFam" id="3.30.930.10:FF:000018">
    <property type="entry name" value="Serine--tRNA ligase"/>
    <property type="match status" value="1"/>
</dbReference>
<dbReference type="Gene3D" id="3.30.930.10">
    <property type="entry name" value="Bira Bifunctional Protein, Domain 2"/>
    <property type="match status" value="1"/>
</dbReference>
<dbReference type="Gene3D" id="1.10.287.40">
    <property type="entry name" value="Serine-tRNA synthetase, tRNA binding domain"/>
    <property type="match status" value="1"/>
</dbReference>
<dbReference type="HAMAP" id="MF_00176">
    <property type="entry name" value="Ser_tRNA_synth_type1"/>
    <property type="match status" value="1"/>
</dbReference>
<dbReference type="InterPro" id="IPR002314">
    <property type="entry name" value="aa-tRNA-synt_IIb"/>
</dbReference>
<dbReference type="InterPro" id="IPR006195">
    <property type="entry name" value="aa-tRNA-synth_II"/>
</dbReference>
<dbReference type="InterPro" id="IPR045864">
    <property type="entry name" value="aa-tRNA-synth_II/BPL/LPL"/>
</dbReference>
<dbReference type="InterPro" id="IPR002317">
    <property type="entry name" value="Ser-tRNA-ligase_type_1"/>
</dbReference>
<dbReference type="InterPro" id="IPR015866">
    <property type="entry name" value="Ser-tRNA-synth_1_N"/>
</dbReference>
<dbReference type="InterPro" id="IPR042103">
    <property type="entry name" value="SerRS_1_N_sf"/>
</dbReference>
<dbReference type="InterPro" id="IPR033729">
    <property type="entry name" value="SerRS_core"/>
</dbReference>
<dbReference type="InterPro" id="IPR010978">
    <property type="entry name" value="tRNA-bd_arm"/>
</dbReference>
<dbReference type="NCBIfam" id="TIGR00414">
    <property type="entry name" value="serS"/>
    <property type="match status" value="1"/>
</dbReference>
<dbReference type="PANTHER" id="PTHR43697:SF1">
    <property type="entry name" value="SERINE--TRNA LIGASE"/>
    <property type="match status" value="1"/>
</dbReference>
<dbReference type="PANTHER" id="PTHR43697">
    <property type="entry name" value="SERYL-TRNA SYNTHETASE"/>
    <property type="match status" value="1"/>
</dbReference>
<dbReference type="Pfam" id="PF02403">
    <property type="entry name" value="Seryl_tRNA_N"/>
    <property type="match status" value="1"/>
</dbReference>
<dbReference type="Pfam" id="PF00587">
    <property type="entry name" value="tRNA-synt_2b"/>
    <property type="match status" value="1"/>
</dbReference>
<dbReference type="PIRSF" id="PIRSF001529">
    <property type="entry name" value="Ser-tRNA-synth_IIa"/>
    <property type="match status" value="1"/>
</dbReference>
<dbReference type="PRINTS" id="PR00981">
    <property type="entry name" value="TRNASYNTHSER"/>
</dbReference>
<dbReference type="SUPFAM" id="SSF55681">
    <property type="entry name" value="Class II aaRS and biotin synthetases"/>
    <property type="match status" value="1"/>
</dbReference>
<dbReference type="SUPFAM" id="SSF46589">
    <property type="entry name" value="tRNA-binding arm"/>
    <property type="match status" value="1"/>
</dbReference>
<dbReference type="PROSITE" id="PS50862">
    <property type="entry name" value="AA_TRNA_LIGASE_II"/>
    <property type="match status" value="1"/>
</dbReference>
<evidence type="ECO:0000255" key="1">
    <source>
        <dbReference type="HAMAP-Rule" id="MF_00176"/>
    </source>
</evidence>
<keyword id="KW-0030">Aminoacyl-tRNA synthetase</keyword>
<keyword id="KW-0067">ATP-binding</keyword>
<keyword id="KW-0963">Cytoplasm</keyword>
<keyword id="KW-0436">Ligase</keyword>
<keyword id="KW-0547">Nucleotide-binding</keyword>
<keyword id="KW-0648">Protein biosynthesis</keyword>
<feature type="chain" id="PRO_1000077200" description="Serine--tRNA ligase">
    <location>
        <begin position="1"/>
        <end position="429"/>
    </location>
</feature>
<feature type="binding site" evidence="1">
    <location>
        <begin position="235"/>
        <end position="237"/>
    </location>
    <ligand>
        <name>L-serine</name>
        <dbReference type="ChEBI" id="CHEBI:33384"/>
    </ligand>
</feature>
<feature type="binding site" evidence="1">
    <location>
        <begin position="266"/>
        <end position="268"/>
    </location>
    <ligand>
        <name>ATP</name>
        <dbReference type="ChEBI" id="CHEBI:30616"/>
    </ligand>
</feature>
<feature type="binding site" evidence="1">
    <location>
        <position position="289"/>
    </location>
    <ligand>
        <name>L-serine</name>
        <dbReference type="ChEBI" id="CHEBI:33384"/>
    </ligand>
</feature>
<feature type="binding site" evidence="1">
    <location>
        <begin position="353"/>
        <end position="356"/>
    </location>
    <ligand>
        <name>ATP</name>
        <dbReference type="ChEBI" id="CHEBI:30616"/>
    </ligand>
</feature>
<feature type="binding site" evidence="1">
    <location>
        <position position="389"/>
    </location>
    <ligand>
        <name>L-serine</name>
        <dbReference type="ChEBI" id="CHEBI:33384"/>
    </ligand>
</feature>
<proteinExistence type="inferred from homology"/>
<accession>B0UUT7</accession>
<name>SYS_HISS2</name>
<protein>
    <recommendedName>
        <fullName evidence="1">Serine--tRNA ligase</fullName>
        <ecNumber evidence="1">6.1.1.11</ecNumber>
    </recommendedName>
    <alternativeName>
        <fullName evidence="1">Seryl-tRNA synthetase</fullName>
        <shortName evidence="1">SerRS</shortName>
    </alternativeName>
    <alternativeName>
        <fullName evidence="1">Seryl-tRNA(Ser/Sec) synthetase</fullName>
    </alternativeName>
</protein>
<reference key="1">
    <citation type="submission" date="2008-02" db="EMBL/GenBank/DDBJ databases">
        <title>Complete sequence of Haemophilus somnus 2336.</title>
        <authorList>
            <consortium name="US DOE Joint Genome Institute"/>
            <person name="Siddaramappa S."/>
            <person name="Duncan A.J."/>
            <person name="Challacombe J.F."/>
            <person name="Rainey D."/>
            <person name="Gillaspy A.F."/>
            <person name="Carson M."/>
            <person name="Gipson J."/>
            <person name="Gipson M."/>
            <person name="Bruce D."/>
            <person name="Detter J.C."/>
            <person name="Han C.S."/>
            <person name="Land M."/>
            <person name="Tapia R."/>
            <person name="Thompson L.S."/>
            <person name="Orvis J."/>
            <person name="Zaitshik J."/>
            <person name="Barnes G."/>
            <person name="Brettin T.S."/>
            <person name="Dyer D.W."/>
            <person name="Inzana T.J."/>
        </authorList>
    </citation>
    <scope>NUCLEOTIDE SEQUENCE [LARGE SCALE GENOMIC DNA]</scope>
    <source>
        <strain>2336</strain>
    </source>
</reference>